<feature type="chain" id="PRO_1000001249" description="Ribosome maturation factor RimM">
    <location>
        <begin position="1"/>
        <end position="182"/>
    </location>
</feature>
<feature type="domain" description="PRC barrel" evidence="1">
    <location>
        <begin position="103"/>
        <end position="182"/>
    </location>
</feature>
<dbReference type="EMBL" id="CP000668">
    <property type="protein sequence ID" value="ABP41425.1"/>
    <property type="molecule type" value="Genomic_DNA"/>
</dbReference>
<dbReference type="RefSeq" id="WP_011906406.1">
    <property type="nucleotide sequence ID" value="NZ_CP009715.1"/>
</dbReference>
<dbReference type="SMR" id="A4TQ63"/>
<dbReference type="KEGG" id="ypp:YPDSF_3067"/>
<dbReference type="PATRIC" id="fig|386656.14.peg.1293"/>
<dbReference type="GO" id="GO:0005737">
    <property type="term" value="C:cytoplasm"/>
    <property type="evidence" value="ECO:0007669"/>
    <property type="project" value="UniProtKB-SubCell"/>
</dbReference>
<dbReference type="GO" id="GO:0005840">
    <property type="term" value="C:ribosome"/>
    <property type="evidence" value="ECO:0007669"/>
    <property type="project" value="InterPro"/>
</dbReference>
<dbReference type="GO" id="GO:0043022">
    <property type="term" value="F:ribosome binding"/>
    <property type="evidence" value="ECO:0007669"/>
    <property type="project" value="InterPro"/>
</dbReference>
<dbReference type="GO" id="GO:0042274">
    <property type="term" value="P:ribosomal small subunit biogenesis"/>
    <property type="evidence" value="ECO:0007669"/>
    <property type="project" value="UniProtKB-UniRule"/>
</dbReference>
<dbReference type="GO" id="GO:0006364">
    <property type="term" value="P:rRNA processing"/>
    <property type="evidence" value="ECO:0007669"/>
    <property type="project" value="UniProtKB-UniRule"/>
</dbReference>
<dbReference type="FunFam" id="2.30.30.240:FF:000001">
    <property type="entry name" value="Ribosome maturation factor RimM"/>
    <property type="match status" value="1"/>
</dbReference>
<dbReference type="FunFam" id="2.40.30.60:FF:000001">
    <property type="entry name" value="Ribosome maturation factor RimM"/>
    <property type="match status" value="1"/>
</dbReference>
<dbReference type="Gene3D" id="2.30.30.240">
    <property type="entry name" value="PRC-barrel domain"/>
    <property type="match status" value="1"/>
</dbReference>
<dbReference type="Gene3D" id="2.40.30.60">
    <property type="entry name" value="RimM"/>
    <property type="match status" value="1"/>
</dbReference>
<dbReference type="HAMAP" id="MF_00014">
    <property type="entry name" value="Ribosome_mat_RimM"/>
    <property type="match status" value="1"/>
</dbReference>
<dbReference type="InterPro" id="IPR011033">
    <property type="entry name" value="PRC_barrel-like_sf"/>
</dbReference>
<dbReference type="InterPro" id="IPR056792">
    <property type="entry name" value="PRC_RimM"/>
</dbReference>
<dbReference type="InterPro" id="IPR011961">
    <property type="entry name" value="RimM"/>
</dbReference>
<dbReference type="InterPro" id="IPR002676">
    <property type="entry name" value="RimM_N"/>
</dbReference>
<dbReference type="InterPro" id="IPR036976">
    <property type="entry name" value="RimM_N_sf"/>
</dbReference>
<dbReference type="InterPro" id="IPR009000">
    <property type="entry name" value="Transl_B-barrel_sf"/>
</dbReference>
<dbReference type="NCBIfam" id="TIGR02273">
    <property type="entry name" value="16S_RimM"/>
    <property type="match status" value="1"/>
</dbReference>
<dbReference type="PANTHER" id="PTHR33692">
    <property type="entry name" value="RIBOSOME MATURATION FACTOR RIMM"/>
    <property type="match status" value="1"/>
</dbReference>
<dbReference type="PANTHER" id="PTHR33692:SF1">
    <property type="entry name" value="RIBOSOME MATURATION FACTOR RIMM"/>
    <property type="match status" value="1"/>
</dbReference>
<dbReference type="Pfam" id="PF24986">
    <property type="entry name" value="PRC_RimM"/>
    <property type="match status" value="1"/>
</dbReference>
<dbReference type="Pfam" id="PF01782">
    <property type="entry name" value="RimM"/>
    <property type="match status" value="1"/>
</dbReference>
<dbReference type="SUPFAM" id="SSF50346">
    <property type="entry name" value="PRC-barrel domain"/>
    <property type="match status" value="1"/>
</dbReference>
<dbReference type="SUPFAM" id="SSF50447">
    <property type="entry name" value="Translation proteins"/>
    <property type="match status" value="1"/>
</dbReference>
<comment type="function">
    <text evidence="1">An accessory protein needed during the final step in the assembly of 30S ribosomal subunit, possibly for assembly of the head region. Essential for efficient processing of 16S rRNA. May be needed both before and after RbfA during the maturation of 16S rRNA. It has affinity for free ribosomal 30S subunits but not for 70S ribosomes.</text>
</comment>
<comment type="subunit">
    <text evidence="1">Binds ribosomal protein uS19.</text>
</comment>
<comment type="subcellular location">
    <subcellularLocation>
        <location evidence="1">Cytoplasm</location>
    </subcellularLocation>
</comment>
<comment type="domain">
    <text evidence="1">The PRC barrel domain binds ribosomal protein uS19.</text>
</comment>
<comment type="similarity">
    <text evidence="1">Belongs to the RimM family.</text>
</comment>
<protein>
    <recommendedName>
        <fullName evidence="1">Ribosome maturation factor RimM</fullName>
    </recommendedName>
</protein>
<gene>
    <name evidence="1" type="primary">rimM</name>
    <name type="ordered locus">YPDSF_3067</name>
</gene>
<keyword id="KW-0143">Chaperone</keyword>
<keyword id="KW-0963">Cytoplasm</keyword>
<keyword id="KW-0690">Ribosome biogenesis</keyword>
<keyword id="KW-0698">rRNA processing</keyword>
<evidence type="ECO:0000255" key="1">
    <source>
        <dbReference type="HAMAP-Rule" id="MF_00014"/>
    </source>
</evidence>
<organism>
    <name type="scientific">Yersinia pestis (strain Pestoides F)</name>
    <dbReference type="NCBI Taxonomy" id="386656"/>
    <lineage>
        <taxon>Bacteria</taxon>
        <taxon>Pseudomonadati</taxon>
        <taxon>Pseudomonadota</taxon>
        <taxon>Gammaproteobacteria</taxon>
        <taxon>Enterobacterales</taxon>
        <taxon>Yersiniaceae</taxon>
        <taxon>Yersinia</taxon>
    </lineage>
</organism>
<sequence length="182" mass="20768">MSKQLNPAVPDQPIVLGKMGSTYGIRGWLRVFSSTENAESIFDYQPWFIQQAGKWQHVELEDWKRHSQDLIIKVKGVDDREAANLLTNCEIIVDSTQLPALEEDDYYWKDLMGCQVVTTTGYELGKIIDMMETGSNDVMLVKANLKDAFGMKERLVPFLHGQVIKKVDLTAQRVEVDWDPGF</sequence>
<name>RIMM_YERPP</name>
<accession>A4TQ63</accession>
<proteinExistence type="inferred from homology"/>
<reference key="1">
    <citation type="submission" date="2007-02" db="EMBL/GenBank/DDBJ databases">
        <title>Complete sequence of chromosome of Yersinia pestis Pestoides F.</title>
        <authorList>
            <consortium name="US DOE Joint Genome Institute"/>
            <person name="Copeland A."/>
            <person name="Lucas S."/>
            <person name="Lapidus A."/>
            <person name="Barry K."/>
            <person name="Detter J.C."/>
            <person name="Glavina del Rio T."/>
            <person name="Hammon N."/>
            <person name="Israni S."/>
            <person name="Dalin E."/>
            <person name="Tice H."/>
            <person name="Pitluck S."/>
            <person name="Di Bartolo G."/>
            <person name="Chain P."/>
            <person name="Malfatti S."/>
            <person name="Shin M."/>
            <person name="Vergez L."/>
            <person name="Schmutz J."/>
            <person name="Larimer F."/>
            <person name="Land M."/>
            <person name="Hauser L."/>
            <person name="Worsham P."/>
            <person name="Chu M."/>
            <person name="Bearden S."/>
            <person name="Garcia E."/>
            <person name="Richardson P."/>
        </authorList>
    </citation>
    <scope>NUCLEOTIDE SEQUENCE [LARGE SCALE GENOMIC DNA]</scope>
    <source>
        <strain>Pestoides F</strain>
    </source>
</reference>